<organism>
    <name type="scientific">Shewanella sp. (strain ANA-3)</name>
    <dbReference type="NCBI Taxonomy" id="94122"/>
    <lineage>
        <taxon>Bacteria</taxon>
        <taxon>Pseudomonadati</taxon>
        <taxon>Pseudomonadota</taxon>
        <taxon>Gammaproteobacteria</taxon>
        <taxon>Alteromonadales</taxon>
        <taxon>Shewanellaceae</taxon>
        <taxon>Shewanella</taxon>
    </lineage>
</organism>
<accession>A0L1Y5</accession>
<gene>
    <name evidence="1" type="primary">zapB</name>
    <name type="ordered locus">Shewana3_3836</name>
</gene>
<feature type="chain" id="PRO_0000333929" description="Cell division protein ZapB">
    <location>
        <begin position="1"/>
        <end position="73"/>
    </location>
</feature>
<feature type="coiled-coil region" evidence="1">
    <location>
        <begin position="3"/>
        <end position="67"/>
    </location>
</feature>
<comment type="function">
    <text evidence="1">Non-essential, abundant cell division factor that is required for proper Z-ring formation. It is recruited early to the divisome by direct interaction with FtsZ, stimulating Z-ring assembly and thereby promoting cell division earlier in the cell cycle. Its recruitment to the Z-ring requires functional FtsA or ZipA.</text>
</comment>
<comment type="subunit">
    <text evidence="1">Homodimer. The ends of the coiled-coil dimer bind to each other, forming polymers. Interacts with FtsZ.</text>
</comment>
<comment type="subcellular location">
    <subcellularLocation>
        <location>Cytoplasm</location>
    </subcellularLocation>
    <text evidence="1">Localizes to the septum at mid-cell, in a FtsZ-like pattern.</text>
</comment>
<comment type="similarity">
    <text evidence="1">Belongs to the ZapB family.</text>
</comment>
<dbReference type="EMBL" id="CP000469">
    <property type="protein sequence ID" value="ABK50054.1"/>
    <property type="molecule type" value="Genomic_DNA"/>
</dbReference>
<dbReference type="RefSeq" id="WP_011718573.1">
    <property type="nucleotide sequence ID" value="NC_008577.1"/>
</dbReference>
<dbReference type="SMR" id="A0L1Y5"/>
<dbReference type="STRING" id="94122.Shewana3_3836"/>
<dbReference type="KEGG" id="shn:Shewana3_3836"/>
<dbReference type="eggNOG" id="COG3074">
    <property type="taxonomic scope" value="Bacteria"/>
</dbReference>
<dbReference type="HOGENOM" id="CLU_171174_1_0_6"/>
<dbReference type="Proteomes" id="UP000002589">
    <property type="component" value="Chromosome"/>
</dbReference>
<dbReference type="GO" id="GO:0005737">
    <property type="term" value="C:cytoplasm"/>
    <property type="evidence" value="ECO:0007669"/>
    <property type="project" value="UniProtKB-SubCell"/>
</dbReference>
<dbReference type="GO" id="GO:0000917">
    <property type="term" value="P:division septum assembly"/>
    <property type="evidence" value="ECO:0007669"/>
    <property type="project" value="UniProtKB-KW"/>
</dbReference>
<dbReference type="GO" id="GO:0043093">
    <property type="term" value="P:FtsZ-dependent cytokinesis"/>
    <property type="evidence" value="ECO:0007669"/>
    <property type="project" value="UniProtKB-UniRule"/>
</dbReference>
<dbReference type="Gene3D" id="1.20.5.340">
    <property type="match status" value="1"/>
</dbReference>
<dbReference type="HAMAP" id="MF_01196">
    <property type="entry name" value="ZapB"/>
    <property type="match status" value="1"/>
</dbReference>
<dbReference type="InterPro" id="IPR009252">
    <property type="entry name" value="Cell_div_ZapB"/>
</dbReference>
<dbReference type="Pfam" id="PF06005">
    <property type="entry name" value="ZapB"/>
    <property type="match status" value="1"/>
</dbReference>
<keyword id="KW-0131">Cell cycle</keyword>
<keyword id="KW-0132">Cell division</keyword>
<keyword id="KW-0175">Coiled coil</keyword>
<keyword id="KW-0963">Cytoplasm</keyword>
<keyword id="KW-0717">Septation</keyword>
<proteinExistence type="inferred from homology"/>
<protein>
    <recommendedName>
        <fullName evidence="1">Cell division protein ZapB</fullName>
    </recommendedName>
</protein>
<evidence type="ECO:0000255" key="1">
    <source>
        <dbReference type="HAMAP-Rule" id="MF_01196"/>
    </source>
</evidence>
<sequence length="73" mass="8342">MSLELLSKLETKIQATLETIELLKMELEEEKQKTSALNEQNQQLSEQNQQLQQELASWNDKVTGLVGLLNSEI</sequence>
<reference key="1">
    <citation type="submission" date="2006-09" db="EMBL/GenBank/DDBJ databases">
        <title>Complete sequence of chromosome 1 of Shewanella sp. ANA-3.</title>
        <authorList>
            <person name="Copeland A."/>
            <person name="Lucas S."/>
            <person name="Lapidus A."/>
            <person name="Barry K."/>
            <person name="Detter J.C."/>
            <person name="Glavina del Rio T."/>
            <person name="Hammon N."/>
            <person name="Israni S."/>
            <person name="Dalin E."/>
            <person name="Tice H."/>
            <person name="Pitluck S."/>
            <person name="Chertkov O."/>
            <person name="Brettin T."/>
            <person name="Bruce D."/>
            <person name="Han C."/>
            <person name="Tapia R."/>
            <person name="Gilna P."/>
            <person name="Schmutz J."/>
            <person name="Larimer F."/>
            <person name="Land M."/>
            <person name="Hauser L."/>
            <person name="Kyrpides N."/>
            <person name="Kim E."/>
            <person name="Newman D."/>
            <person name="Salticov C."/>
            <person name="Konstantinidis K."/>
            <person name="Klappenback J."/>
            <person name="Tiedje J."/>
            <person name="Richardson P."/>
        </authorList>
    </citation>
    <scope>NUCLEOTIDE SEQUENCE [LARGE SCALE GENOMIC DNA]</scope>
    <source>
        <strain>ANA-3</strain>
    </source>
</reference>
<name>ZAPB_SHESA</name>